<feature type="chain" id="PRO_0000207620" description="Autophagy-related protein 22">
    <location>
        <begin position="1"/>
        <end position="541"/>
    </location>
</feature>
<feature type="transmembrane region" description="Helical" evidence="2">
    <location>
        <begin position="41"/>
        <end position="61"/>
    </location>
</feature>
<feature type="transmembrane region" description="Helical" evidence="2">
    <location>
        <begin position="103"/>
        <end position="123"/>
    </location>
</feature>
<feature type="transmembrane region" description="Helical" evidence="2">
    <location>
        <begin position="139"/>
        <end position="159"/>
    </location>
</feature>
<feature type="transmembrane region" description="Helical" evidence="2">
    <location>
        <begin position="163"/>
        <end position="183"/>
    </location>
</feature>
<feature type="transmembrane region" description="Helical" evidence="2">
    <location>
        <begin position="228"/>
        <end position="248"/>
    </location>
</feature>
<feature type="transmembrane region" description="Helical" evidence="2">
    <location>
        <begin position="257"/>
        <end position="277"/>
    </location>
</feature>
<feature type="transmembrane region" description="Helical" evidence="2">
    <location>
        <begin position="332"/>
        <end position="352"/>
    </location>
</feature>
<feature type="transmembrane region" description="Helical" evidence="2">
    <location>
        <begin position="366"/>
        <end position="386"/>
    </location>
</feature>
<feature type="transmembrane region" description="Helical" evidence="2">
    <location>
        <begin position="402"/>
        <end position="422"/>
    </location>
</feature>
<feature type="transmembrane region" description="Helical" evidence="2">
    <location>
        <begin position="431"/>
        <end position="451"/>
    </location>
</feature>
<feature type="transmembrane region" description="Helical" evidence="2">
    <location>
        <begin position="470"/>
        <end position="490"/>
    </location>
</feature>
<feature type="transmembrane region" description="Helical" evidence="2">
    <location>
        <begin position="499"/>
        <end position="519"/>
    </location>
</feature>
<feature type="glycosylation site" description="N-linked (GlcNAc...) asparagine" evidence="2">
    <location>
        <position position="308"/>
    </location>
</feature>
<proteinExistence type="inferred from homology"/>
<organism>
    <name type="scientific">Candida glabrata (strain ATCC 2001 / BCRC 20586 / JCM 3761 / NBRC 0622 / NRRL Y-65 / CBS 138)</name>
    <name type="common">Yeast</name>
    <name type="synonym">Nakaseomyces glabratus</name>
    <dbReference type="NCBI Taxonomy" id="284593"/>
    <lineage>
        <taxon>Eukaryota</taxon>
        <taxon>Fungi</taxon>
        <taxon>Dikarya</taxon>
        <taxon>Ascomycota</taxon>
        <taxon>Saccharomycotina</taxon>
        <taxon>Saccharomycetes</taxon>
        <taxon>Saccharomycetales</taxon>
        <taxon>Saccharomycetaceae</taxon>
        <taxon>Nakaseomyces</taxon>
    </lineage>
</organism>
<reference key="1">
    <citation type="journal article" date="2004" name="Nature">
        <title>Genome evolution in yeasts.</title>
        <authorList>
            <person name="Dujon B."/>
            <person name="Sherman D."/>
            <person name="Fischer G."/>
            <person name="Durrens P."/>
            <person name="Casaregola S."/>
            <person name="Lafontaine I."/>
            <person name="de Montigny J."/>
            <person name="Marck C."/>
            <person name="Neuveglise C."/>
            <person name="Talla E."/>
            <person name="Goffard N."/>
            <person name="Frangeul L."/>
            <person name="Aigle M."/>
            <person name="Anthouard V."/>
            <person name="Babour A."/>
            <person name="Barbe V."/>
            <person name="Barnay S."/>
            <person name="Blanchin S."/>
            <person name="Beckerich J.-M."/>
            <person name="Beyne E."/>
            <person name="Bleykasten C."/>
            <person name="Boisrame A."/>
            <person name="Boyer J."/>
            <person name="Cattolico L."/>
            <person name="Confanioleri F."/>
            <person name="de Daruvar A."/>
            <person name="Despons L."/>
            <person name="Fabre E."/>
            <person name="Fairhead C."/>
            <person name="Ferry-Dumazet H."/>
            <person name="Groppi A."/>
            <person name="Hantraye F."/>
            <person name="Hennequin C."/>
            <person name="Jauniaux N."/>
            <person name="Joyet P."/>
            <person name="Kachouri R."/>
            <person name="Kerrest A."/>
            <person name="Koszul R."/>
            <person name="Lemaire M."/>
            <person name="Lesur I."/>
            <person name="Ma L."/>
            <person name="Muller H."/>
            <person name="Nicaud J.-M."/>
            <person name="Nikolski M."/>
            <person name="Oztas S."/>
            <person name="Ozier-Kalogeropoulos O."/>
            <person name="Pellenz S."/>
            <person name="Potier S."/>
            <person name="Richard G.-F."/>
            <person name="Straub M.-L."/>
            <person name="Suleau A."/>
            <person name="Swennen D."/>
            <person name="Tekaia F."/>
            <person name="Wesolowski-Louvel M."/>
            <person name="Westhof E."/>
            <person name="Wirth B."/>
            <person name="Zeniou-Meyer M."/>
            <person name="Zivanovic Y."/>
            <person name="Bolotin-Fukuhara M."/>
            <person name="Thierry A."/>
            <person name="Bouchier C."/>
            <person name="Caudron B."/>
            <person name="Scarpelli C."/>
            <person name="Gaillardin C."/>
            <person name="Weissenbach J."/>
            <person name="Wincker P."/>
            <person name="Souciet J.-L."/>
        </authorList>
    </citation>
    <scope>NUCLEOTIDE SEQUENCE [LARGE SCALE GENOMIC DNA]</scope>
    <source>
        <strain>ATCC 2001 / BCRC 20586 / JCM 3761 / NBRC 0622 / NRRL Y-65 / CBS 138</strain>
    </source>
</reference>
<keyword id="KW-0029">Amino-acid transport</keyword>
<keyword id="KW-0072">Autophagy</keyword>
<keyword id="KW-0325">Glycoprotein</keyword>
<keyword id="KW-0472">Membrane</keyword>
<keyword id="KW-1185">Reference proteome</keyword>
<keyword id="KW-0812">Transmembrane</keyword>
<keyword id="KW-1133">Transmembrane helix</keyword>
<keyword id="KW-0813">Transport</keyword>
<keyword id="KW-0926">Vacuole</keyword>
<name>ATG22_CANGA</name>
<evidence type="ECO:0000250" key="1"/>
<evidence type="ECO:0000255" key="2"/>
<evidence type="ECO:0000305" key="3"/>
<accession>Q6FX92</accession>
<gene>
    <name type="primary">ATG22</name>
    <name type="ordered locus">CAGL0B00770g</name>
</gene>
<comment type="function">
    <text evidence="1">Vacuolar effluxer which mediate the efflux of amino acids resulting from autophagic degradation. The release of autophagic amino acids allows the maintenance of protein synthesis and viability during nitrogen starvation (By similarity).</text>
</comment>
<comment type="subcellular location">
    <subcellularLocation>
        <location evidence="1">Vacuole membrane</location>
        <topology evidence="1">Multi-pass membrane protein</topology>
    </subcellularLocation>
    <text evidence="1">Vacuole and punctate structures.</text>
</comment>
<comment type="similarity">
    <text evidence="3">Belongs to the ATG22 family.</text>
</comment>
<dbReference type="EMBL" id="CR380948">
    <property type="protein sequence ID" value="CAG57904.1"/>
    <property type="molecule type" value="Genomic_DNA"/>
</dbReference>
<dbReference type="FunCoup" id="Q6FX92">
    <property type="interactions" value="48"/>
</dbReference>
<dbReference type="STRING" id="284593.Q6FX92"/>
<dbReference type="GlyCosmos" id="Q6FX92">
    <property type="glycosylation" value="1 site, No reported glycans"/>
</dbReference>
<dbReference type="EnsemblFungi" id="CAGL0B00770g-T">
    <property type="protein sequence ID" value="CAGL0B00770g-T-p1"/>
    <property type="gene ID" value="CAGL0B00770g"/>
</dbReference>
<dbReference type="KEGG" id="cgr:2886601"/>
<dbReference type="CGD" id="CAL0127816">
    <property type="gene designation" value="AUT4"/>
</dbReference>
<dbReference type="VEuPathDB" id="FungiDB:CAGL0B00770g"/>
<dbReference type="eggNOG" id="ENOG502QR9I">
    <property type="taxonomic scope" value="Eukaryota"/>
</dbReference>
<dbReference type="HOGENOM" id="CLU_017518_1_0_1"/>
<dbReference type="InParanoid" id="Q6FX92"/>
<dbReference type="OMA" id="QQQWEMY"/>
<dbReference type="Proteomes" id="UP000002428">
    <property type="component" value="Chromosome B"/>
</dbReference>
<dbReference type="GO" id="GO:0000329">
    <property type="term" value="C:fungal-type vacuole membrane"/>
    <property type="evidence" value="ECO:0007669"/>
    <property type="project" value="EnsemblFungi"/>
</dbReference>
<dbReference type="GO" id="GO:0032974">
    <property type="term" value="P:amino acid transmembrane export from vacuole"/>
    <property type="evidence" value="ECO:0007669"/>
    <property type="project" value="EnsemblFungi"/>
</dbReference>
<dbReference type="GO" id="GO:0006914">
    <property type="term" value="P:autophagy"/>
    <property type="evidence" value="ECO:0007669"/>
    <property type="project" value="UniProtKB-KW"/>
</dbReference>
<dbReference type="CDD" id="cd17483">
    <property type="entry name" value="MFS_Atg22_like"/>
    <property type="match status" value="1"/>
</dbReference>
<dbReference type="Gene3D" id="1.20.1250.20">
    <property type="entry name" value="MFS general substrate transporter like domains"/>
    <property type="match status" value="1"/>
</dbReference>
<dbReference type="InterPro" id="IPR044738">
    <property type="entry name" value="Atg22"/>
</dbReference>
<dbReference type="InterPro" id="IPR024671">
    <property type="entry name" value="Atg22-like"/>
</dbReference>
<dbReference type="InterPro" id="IPR050495">
    <property type="entry name" value="ATG22/LtaA_families"/>
</dbReference>
<dbReference type="InterPro" id="IPR036259">
    <property type="entry name" value="MFS_trans_sf"/>
</dbReference>
<dbReference type="PANTHER" id="PTHR23519">
    <property type="entry name" value="AUTOPHAGY-RELATED PROTEIN 22"/>
    <property type="match status" value="1"/>
</dbReference>
<dbReference type="PANTHER" id="PTHR23519:SF1">
    <property type="entry name" value="AUTOPHAGY-RELATED PROTEIN 22"/>
    <property type="match status" value="1"/>
</dbReference>
<dbReference type="Pfam" id="PF11700">
    <property type="entry name" value="ATG22"/>
    <property type="match status" value="1"/>
</dbReference>
<dbReference type="SUPFAM" id="SSF103473">
    <property type="entry name" value="MFS general substrate transporter"/>
    <property type="match status" value="2"/>
</dbReference>
<sequence>MAYESLASEPNDGVTDHNDDALYVGIDTLKAARDNIKGWYLYSFSSEPFVVSAVATYVPLLLEQFARINGVQLDDHNAPCSTSSSDKCVLGLFNNRVFVDSSSFALYVFSLSVLFQTVVVISVSGMVDRWKTISFRKNVLVTFGMVGAFATVLISLLNETQYYSLVVYYIVANSCYGVINVVGNSLLPLFVDDLVRLQPDHTVPAAEELSLDTDDKDGLTTVISGRGASIGYSAALVVQLMSILLVRLSPSKQDIQYAVFFVGLWWAVWQFPMYWLLSDSIIPDQQSNQAIANGRYYDIDGSIFTFVNLSSLKYGWKLLGEALKHATLLRDVVIFLIGWFILSDSLTTINSTAIIFAKTELHMSTINLISLSIITMISAMVGAFAIPQIVSTSLHVPPQRTILLIICWASIIPLYGMLGFIFQSFGLKHQFEMFILGVWYGISMGSVAAVSRSLFTIIIPKGRESTFFSLFSITDKGSSIVGPFIIGIVTDKTHNIRYSFFILFILLVFSLPIFKMLNVERGKREAEEISKLHVNIDPIQD</sequence>
<protein>
    <recommendedName>
        <fullName>Autophagy-related protein 22</fullName>
    </recommendedName>
</protein>